<organism>
    <name type="scientific">Thermobifida fusca (strain YX)</name>
    <dbReference type="NCBI Taxonomy" id="269800"/>
    <lineage>
        <taxon>Bacteria</taxon>
        <taxon>Bacillati</taxon>
        <taxon>Actinomycetota</taxon>
        <taxon>Actinomycetes</taxon>
        <taxon>Streptosporangiales</taxon>
        <taxon>Nocardiopsidaceae</taxon>
        <taxon>Thermobifida</taxon>
    </lineage>
</organism>
<evidence type="ECO:0000255" key="1">
    <source>
        <dbReference type="HAMAP-Rule" id="MF_01020"/>
    </source>
</evidence>
<sequence length="87" mass="9891">MKTFEELFTELSEKARTRPAGSRTVAQLDAGVHAIGKKVVEEAAEVWMAAEYQSDEETAEEISQLLYHVQVLMLARGLRLEDVYRHL</sequence>
<feature type="chain" id="PRO_0000230192" description="Phosphoribosyl-ATP pyrophosphatase">
    <location>
        <begin position="1"/>
        <end position="87"/>
    </location>
</feature>
<protein>
    <recommendedName>
        <fullName evidence="1">Phosphoribosyl-ATP pyrophosphatase</fullName>
        <shortName evidence="1">PRA-PH</shortName>
        <ecNumber evidence="1">3.6.1.31</ecNumber>
    </recommendedName>
</protein>
<keyword id="KW-0028">Amino-acid biosynthesis</keyword>
<keyword id="KW-0067">ATP-binding</keyword>
<keyword id="KW-0963">Cytoplasm</keyword>
<keyword id="KW-0368">Histidine biosynthesis</keyword>
<keyword id="KW-0378">Hydrolase</keyword>
<keyword id="KW-0547">Nucleotide-binding</keyword>
<name>HIS2_THEFY</name>
<dbReference type="EC" id="3.6.1.31" evidence="1"/>
<dbReference type="EMBL" id="CP000088">
    <property type="protein sequence ID" value="AAZ54213.1"/>
    <property type="molecule type" value="Genomic_DNA"/>
</dbReference>
<dbReference type="RefSeq" id="WP_011290622.1">
    <property type="nucleotide sequence ID" value="NC_007333.1"/>
</dbReference>
<dbReference type="SMR" id="Q47TK1"/>
<dbReference type="STRING" id="269800.Tfu_0175"/>
<dbReference type="KEGG" id="tfu:Tfu_0175"/>
<dbReference type="eggNOG" id="COG0140">
    <property type="taxonomic scope" value="Bacteria"/>
</dbReference>
<dbReference type="HOGENOM" id="CLU_123337_2_1_11"/>
<dbReference type="OrthoDB" id="3212875at2"/>
<dbReference type="UniPathway" id="UPA00031">
    <property type="reaction ID" value="UER00007"/>
</dbReference>
<dbReference type="GO" id="GO:0005737">
    <property type="term" value="C:cytoplasm"/>
    <property type="evidence" value="ECO:0007669"/>
    <property type="project" value="UniProtKB-SubCell"/>
</dbReference>
<dbReference type="GO" id="GO:0005524">
    <property type="term" value="F:ATP binding"/>
    <property type="evidence" value="ECO:0007669"/>
    <property type="project" value="UniProtKB-KW"/>
</dbReference>
<dbReference type="GO" id="GO:0004636">
    <property type="term" value="F:phosphoribosyl-ATP diphosphatase activity"/>
    <property type="evidence" value="ECO:0007669"/>
    <property type="project" value="UniProtKB-UniRule"/>
</dbReference>
<dbReference type="GO" id="GO:0000105">
    <property type="term" value="P:L-histidine biosynthetic process"/>
    <property type="evidence" value="ECO:0007669"/>
    <property type="project" value="UniProtKB-UniRule"/>
</dbReference>
<dbReference type="CDD" id="cd11547">
    <property type="entry name" value="NTP-PPase_HisE"/>
    <property type="match status" value="1"/>
</dbReference>
<dbReference type="Gene3D" id="1.10.287.1080">
    <property type="entry name" value="MazG-like"/>
    <property type="match status" value="1"/>
</dbReference>
<dbReference type="HAMAP" id="MF_01020">
    <property type="entry name" value="HisE"/>
    <property type="match status" value="1"/>
</dbReference>
<dbReference type="InterPro" id="IPR008179">
    <property type="entry name" value="HisE"/>
</dbReference>
<dbReference type="InterPro" id="IPR021130">
    <property type="entry name" value="PRib-ATP_PPHydrolase-like"/>
</dbReference>
<dbReference type="NCBIfam" id="TIGR03188">
    <property type="entry name" value="histidine_hisI"/>
    <property type="match status" value="1"/>
</dbReference>
<dbReference type="NCBIfam" id="NF001610">
    <property type="entry name" value="PRK00400.1-1"/>
    <property type="match status" value="1"/>
</dbReference>
<dbReference type="PANTHER" id="PTHR42945">
    <property type="entry name" value="HISTIDINE BIOSYNTHESIS BIFUNCTIONAL PROTEIN"/>
    <property type="match status" value="1"/>
</dbReference>
<dbReference type="PANTHER" id="PTHR42945:SF1">
    <property type="entry name" value="HISTIDINE BIOSYNTHESIS BIFUNCTIONAL PROTEIN HIS7"/>
    <property type="match status" value="1"/>
</dbReference>
<dbReference type="Pfam" id="PF01503">
    <property type="entry name" value="PRA-PH"/>
    <property type="match status" value="1"/>
</dbReference>
<dbReference type="SUPFAM" id="SSF101386">
    <property type="entry name" value="all-alpha NTP pyrophosphatases"/>
    <property type="match status" value="1"/>
</dbReference>
<comment type="catalytic activity">
    <reaction evidence="1">
        <text>1-(5-phospho-beta-D-ribosyl)-ATP + H2O = 1-(5-phospho-beta-D-ribosyl)-5'-AMP + diphosphate + H(+)</text>
        <dbReference type="Rhea" id="RHEA:22828"/>
        <dbReference type="ChEBI" id="CHEBI:15377"/>
        <dbReference type="ChEBI" id="CHEBI:15378"/>
        <dbReference type="ChEBI" id="CHEBI:33019"/>
        <dbReference type="ChEBI" id="CHEBI:59457"/>
        <dbReference type="ChEBI" id="CHEBI:73183"/>
        <dbReference type="EC" id="3.6.1.31"/>
    </reaction>
</comment>
<comment type="pathway">
    <text evidence="1">Amino-acid biosynthesis; L-histidine biosynthesis; L-histidine from 5-phospho-alpha-D-ribose 1-diphosphate: step 2/9.</text>
</comment>
<comment type="subcellular location">
    <subcellularLocation>
        <location evidence="1">Cytoplasm</location>
    </subcellularLocation>
</comment>
<comment type="similarity">
    <text evidence="1">Belongs to the PRA-PH family.</text>
</comment>
<reference key="1">
    <citation type="journal article" date="2007" name="J. Bacteriol.">
        <title>Genome sequence and analysis of the soil cellulolytic actinomycete Thermobifida fusca YX.</title>
        <authorList>
            <person name="Lykidis A."/>
            <person name="Mavromatis K."/>
            <person name="Ivanova N."/>
            <person name="Anderson I."/>
            <person name="Land M."/>
            <person name="DiBartolo G."/>
            <person name="Martinez M."/>
            <person name="Lapidus A."/>
            <person name="Lucas S."/>
            <person name="Copeland A."/>
            <person name="Richardson P."/>
            <person name="Wilson D.B."/>
            <person name="Kyrpides N."/>
        </authorList>
    </citation>
    <scope>NUCLEOTIDE SEQUENCE [LARGE SCALE GENOMIC DNA]</scope>
    <source>
        <strain>YX</strain>
    </source>
</reference>
<accession>Q47TK1</accession>
<proteinExistence type="inferred from homology"/>
<gene>
    <name evidence="1" type="primary">hisE</name>
    <name type="ordered locus">Tfu_0175</name>
</gene>